<sequence>MTQYTPMIQQYLKVKADYQDAFLFFRLGDFYEMFFEDAVKAAHELEITLTSRDGGSSERIPMCGVPYHAAKNYIEQLVEKGYKVAVCEQVEDPKTAKGVVRREVVQLITPGTMMEGRTIDEKENNFLAALTHFEDGSYALACNDLTTGQNTVTLLTGSVEDILLEVYATGSKEIVVDSSFSKDELNKLTETLKMTISYEDATAIPEGLEHLVKNVSQAKLIKAVGRLFNYVIRTQKRSLDHLQPVEIYYTNQFMKIDVHSKRNLELTETLRTKEKTGSLLWLLDKTKTAMGGRMLKQWMERPLIQKERIEERLEMVETFVNDYFLREDLKEKLKEVYDLERLAGKVAFGNVNARDLLQLRRSLLQVPAILEAISLLDNAYAARLIQGADPCESLTELLGRSIQENPPLSIKDGDIIKDGYNDKLDQYRYVSKNGKTWIAELEKRERDITGIKSLKIGYNRIFGYYIEVTKANLGALPEGRYERKQTLANAERFITDELKEKETLILEAEEKIVQLEYDLFTALREEVKVFIPKLQHLAKVISELDVLQSFATVSEEEQFVKPVLTTKREIFIKDGRHPVVEKVLNGKLYVPNDCIMPENMDVFLITGPNMSGKSTYMRQLALVTVMSQIGCFVPATEAVLPVFDQIFTRIGAADDLISGQSTFMVEMLEAKNAIANASERSLILFDEIGRGTSTYDGMALAQAIIEHIHDQIGAKTLFSTHYHELTVLEDSLDQLKNVHVSAIEENGKVVFLHKIQDGAADKSYGIHVAQLAELPDSLITRAKEVLAQLEGQEEIIIPKRVEVKAQAQEVIPEPVVVKEEPVEIEETKAETEEESQLSFFGGEQSSKKQDKPVLDAKETAVLTQIKKIDLLDMTPLEAMNELYRLQKKLKKG</sequence>
<feature type="chain" id="PRO_1000117280" description="DNA mismatch repair protein MutS">
    <location>
        <begin position="1"/>
        <end position="892"/>
    </location>
</feature>
<feature type="region of interest" description="Disordered" evidence="2">
    <location>
        <begin position="826"/>
        <end position="854"/>
    </location>
</feature>
<feature type="compositionally biased region" description="Basic and acidic residues" evidence="2">
    <location>
        <begin position="845"/>
        <end position="854"/>
    </location>
</feature>
<feature type="binding site" evidence="1">
    <location>
        <begin position="607"/>
        <end position="614"/>
    </location>
    <ligand>
        <name>ATP</name>
        <dbReference type="ChEBI" id="CHEBI:30616"/>
    </ligand>
</feature>
<reference key="1">
    <citation type="submission" date="2008-10" db="EMBL/GenBank/DDBJ databases">
        <title>Genome sequence of Bacillus cereus AH187.</title>
        <authorList>
            <person name="Dodson R.J."/>
            <person name="Durkin A.S."/>
            <person name="Rosovitz M.J."/>
            <person name="Rasko D.A."/>
            <person name="Kolsto A.B."/>
            <person name="Okstad O.A."/>
            <person name="Ravel J."/>
            <person name="Sutton G."/>
        </authorList>
    </citation>
    <scope>NUCLEOTIDE SEQUENCE [LARGE SCALE GENOMIC DNA]</scope>
    <source>
        <strain>AH187</strain>
    </source>
</reference>
<dbReference type="EMBL" id="CP001177">
    <property type="protein sequence ID" value="ACJ80177.1"/>
    <property type="molecule type" value="Genomic_DNA"/>
</dbReference>
<dbReference type="SMR" id="B7HLA3"/>
<dbReference type="KEGG" id="bcr:BCAH187_A3816"/>
<dbReference type="HOGENOM" id="CLU_002472_3_2_9"/>
<dbReference type="Proteomes" id="UP000002214">
    <property type="component" value="Chromosome"/>
</dbReference>
<dbReference type="GO" id="GO:0005829">
    <property type="term" value="C:cytosol"/>
    <property type="evidence" value="ECO:0007669"/>
    <property type="project" value="TreeGrafter"/>
</dbReference>
<dbReference type="GO" id="GO:0005524">
    <property type="term" value="F:ATP binding"/>
    <property type="evidence" value="ECO:0007669"/>
    <property type="project" value="UniProtKB-UniRule"/>
</dbReference>
<dbReference type="GO" id="GO:0140664">
    <property type="term" value="F:ATP-dependent DNA damage sensor activity"/>
    <property type="evidence" value="ECO:0007669"/>
    <property type="project" value="InterPro"/>
</dbReference>
<dbReference type="GO" id="GO:0003684">
    <property type="term" value="F:damaged DNA binding"/>
    <property type="evidence" value="ECO:0007669"/>
    <property type="project" value="UniProtKB-UniRule"/>
</dbReference>
<dbReference type="GO" id="GO:0030983">
    <property type="term" value="F:mismatched DNA binding"/>
    <property type="evidence" value="ECO:0007669"/>
    <property type="project" value="InterPro"/>
</dbReference>
<dbReference type="GO" id="GO:0006298">
    <property type="term" value="P:mismatch repair"/>
    <property type="evidence" value="ECO:0007669"/>
    <property type="project" value="UniProtKB-UniRule"/>
</dbReference>
<dbReference type="CDD" id="cd03284">
    <property type="entry name" value="ABC_MutS1"/>
    <property type="match status" value="1"/>
</dbReference>
<dbReference type="FunFam" id="1.10.1420.10:FF:000007">
    <property type="entry name" value="DNA mismatch repair protein MutS"/>
    <property type="match status" value="1"/>
</dbReference>
<dbReference type="FunFam" id="3.30.420.110:FF:000007">
    <property type="entry name" value="DNA mismatch repair protein MutS"/>
    <property type="match status" value="1"/>
</dbReference>
<dbReference type="FunFam" id="3.40.1170.10:FF:000001">
    <property type="entry name" value="DNA mismatch repair protein MutS"/>
    <property type="match status" value="1"/>
</dbReference>
<dbReference type="FunFam" id="3.40.50.300:FF:000896">
    <property type="entry name" value="DNA mismatch repair protein MutS"/>
    <property type="match status" value="1"/>
</dbReference>
<dbReference type="Gene3D" id="1.10.1420.10">
    <property type="match status" value="2"/>
</dbReference>
<dbReference type="Gene3D" id="3.40.1170.10">
    <property type="entry name" value="DNA repair protein MutS, domain I"/>
    <property type="match status" value="1"/>
</dbReference>
<dbReference type="Gene3D" id="3.30.420.110">
    <property type="entry name" value="MutS, connector domain"/>
    <property type="match status" value="1"/>
</dbReference>
<dbReference type="Gene3D" id="3.40.50.300">
    <property type="entry name" value="P-loop containing nucleotide triphosphate hydrolases"/>
    <property type="match status" value="1"/>
</dbReference>
<dbReference type="HAMAP" id="MF_00096">
    <property type="entry name" value="MutS"/>
    <property type="match status" value="1"/>
</dbReference>
<dbReference type="InterPro" id="IPR005748">
    <property type="entry name" value="DNA_mismatch_repair_MutS"/>
</dbReference>
<dbReference type="InterPro" id="IPR007695">
    <property type="entry name" value="DNA_mismatch_repair_MutS-lik_N"/>
</dbReference>
<dbReference type="InterPro" id="IPR017261">
    <property type="entry name" value="DNA_mismatch_repair_MutS/MSH"/>
</dbReference>
<dbReference type="InterPro" id="IPR000432">
    <property type="entry name" value="DNA_mismatch_repair_MutS_C"/>
</dbReference>
<dbReference type="InterPro" id="IPR007861">
    <property type="entry name" value="DNA_mismatch_repair_MutS_clamp"/>
</dbReference>
<dbReference type="InterPro" id="IPR007696">
    <property type="entry name" value="DNA_mismatch_repair_MutS_core"/>
</dbReference>
<dbReference type="InterPro" id="IPR016151">
    <property type="entry name" value="DNA_mismatch_repair_MutS_N"/>
</dbReference>
<dbReference type="InterPro" id="IPR036187">
    <property type="entry name" value="DNA_mismatch_repair_MutS_sf"/>
</dbReference>
<dbReference type="InterPro" id="IPR007860">
    <property type="entry name" value="DNA_mmatch_repair_MutS_con_dom"/>
</dbReference>
<dbReference type="InterPro" id="IPR045076">
    <property type="entry name" value="MutS"/>
</dbReference>
<dbReference type="InterPro" id="IPR036678">
    <property type="entry name" value="MutS_con_dom_sf"/>
</dbReference>
<dbReference type="InterPro" id="IPR027417">
    <property type="entry name" value="P-loop_NTPase"/>
</dbReference>
<dbReference type="NCBIfam" id="TIGR01070">
    <property type="entry name" value="mutS1"/>
    <property type="match status" value="1"/>
</dbReference>
<dbReference type="NCBIfam" id="NF003810">
    <property type="entry name" value="PRK05399.1"/>
    <property type="match status" value="1"/>
</dbReference>
<dbReference type="PANTHER" id="PTHR11361:SF34">
    <property type="entry name" value="DNA MISMATCH REPAIR PROTEIN MSH1, MITOCHONDRIAL"/>
    <property type="match status" value="1"/>
</dbReference>
<dbReference type="PANTHER" id="PTHR11361">
    <property type="entry name" value="DNA MISMATCH REPAIR PROTEIN MUTS FAMILY MEMBER"/>
    <property type="match status" value="1"/>
</dbReference>
<dbReference type="Pfam" id="PF01624">
    <property type="entry name" value="MutS_I"/>
    <property type="match status" value="1"/>
</dbReference>
<dbReference type="Pfam" id="PF05188">
    <property type="entry name" value="MutS_II"/>
    <property type="match status" value="1"/>
</dbReference>
<dbReference type="Pfam" id="PF05192">
    <property type="entry name" value="MutS_III"/>
    <property type="match status" value="1"/>
</dbReference>
<dbReference type="Pfam" id="PF05190">
    <property type="entry name" value="MutS_IV"/>
    <property type="match status" value="1"/>
</dbReference>
<dbReference type="Pfam" id="PF00488">
    <property type="entry name" value="MutS_V"/>
    <property type="match status" value="1"/>
</dbReference>
<dbReference type="PIRSF" id="PIRSF037677">
    <property type="entry name" value="DNA_mis_repair_Msh6"/>
    <property type="match status" value="1"/>
</dbReference>
<dbReference type="SMART" id="SM00534">
    <property type="entry name" value="MUTSac"/>
    <property type="match status" value="1"/>
</dbReference>
<dbReference type="SMART" id="SM00533">
    <property type="entry name" value="MUTSd"/>
    <property type="match status" value="1"/>
</dbReference>
<dbReference type="SUPFAM" id="SSF55271">
    <property type="entry name" value="DNA repair protein MutS, domain I"/>
    <property type="match status" value="1"/>
</dbReference>
<dbReference type="SUPFAM" id="SSF53150">
    <property type="entry name" value="DNA repair protein MutS, domain II"/>
    <property type="match status" value="1"/>
</dbReference>
<dbReference type="SUPFAM" id="SSF48334">
    <property type="entry name" value="DNA repair protein MutS, domain III"/>
    <property type="match status" value="1"/>
</dbReference>
<dbReference type="SUPFAM" id="SSF52540">
    <property type="entry name" value="P-loop containing nucleoside triphosphate hydrolases"/>
    <property type="match status" value="1"/>
</dbReference>
<dbReference type="PROSITE" id="PS00486">
    <property type="entry name" value="DNA_MISMATCH_REPAIR_2"/>
    <property type="match status" value="1"/>
</dbReference>
<accession>B7HLA3</accession>
<name>MUTS_BACC7</name>
<organism>
    <name type="scientific">Bacillus cereus (strain AH187)</name>
    <dbReference type="NCBI Taxonomy" id="405534"/>
    <lineage>
        <taxon>Bacteria</taxon>
        <taxon>Bacillati</taxon>
        <taxon>Bacillota</taxon>
        <taxon>Bacilli</taxon>
        <taxon>Bacillales</taxon>
        <taxon>Bacillaceae</taxon>
        <taxon>Bacillus</taxon>
        <taxon>Bacillus cereus group</taxon>
    </lineage>
</organism>
<proteinExistence type="inferred from homology"/>
<protein>
    <recommendedName>
        <fullName evidence="1">DNA mismatch repair protein MutS</fullName>
    </recommendedName>
</protein>
<keyword id="KW-0067">ATP-binding</keyword>
<keyword id="KW-0227">DNA damage</keyword>
<keyword id="KW-0234">DNA repair</keyword>
<keyword id="KW-0238">DNA-binding</keyword>
<keyword id="KW-0547">Nucleotide-binding</keyword>
<gene>
    <name evidence="1" type="primary">mutS</name>
    <name type="ordered locus">BCAH187_A3816</name>
</gene>
<evidence type="ECO:0000255" key="1">
    <source>
        <dbReference type="HAMAP-Rule" id="MF_00096"/>
    </source>
</evidence>
<evidence type="ECO:0000256" key="2">
    <source>
        <dbReference type="SAM" id="MobiDB-lite"/>
    </source>
</evidence>
<comment type="function">
    <text evidence="1">This protein is involved in the repair of mismatches in DNA. It is possible that it carries out the mismatch recognition step. This protein has a weak ATPase activity.</text>
</comment>
<comment type="similarity">
    <text evidence="1">Belongs to the DNA mismatch repair MutS family.</text>
</comment>